<comment type="function">
    <text evidence="1">Part of a membrane-bound complex that couples electron transfer with translocation of ions across the membrane. Required to maintain the reduced state of SoxR.</text>
</comment>
<comment type="subunit">
    <text evidence="1">The complex is composed of six subunits: RsxA, RsxB, RsxC, RsxD, RsxE and RsxG.</text>
</comment>
<comment type="subcellular location">
    <subcellularLocation>
        <location evidence="1">Cell inner membrane</location>
        <topology evidence="1">Multi-pass membrane protein</topology>
    </subcellularLocation>
</comment>
<comment type="similarity">
    <text evidence="1">Belongs to the NqrDE/RnfAE family.</text>
</comment>
<proteinExistence type="inferred from homology"/>
<protein>
    <recommendedName>
        <fullName evidence="1">Ion-translocating oxidoreductase complex subunit E</fullName>
        <ecNumber evidence="1">7.-.-.-</ecNumber>
    </recommendedName>
    <alternativeName>
        <fullName evidence="1">Rsx electron transport complex subunit E</fullName>
    </alternativeName>
</protein>
<evidence type="ECO:0000255" key="1">
    <source>
        <dbReference type="HAMAP-Rule" id="MF_00478"/>
    </source>
</evidence>
<keyword id="KW-0997">Cell inner membrane</keyword>
<keyword id="KW-1003">Cell membrane</keyword>
<keyword id="KW-0249">Electron transport</keyword>
<keyword id="KW-0472">Membrane</keyword>
<keyword id="KW-1185">Reference proteome</keyword>
<keyword id="KW-1278">Translocase</keyword>
<keyword id="KW-0812">Transmembrane</keyword>
<keyword id="KW-1133">Transmembrane helix</keyword>
<keyword id="KW-0813">Transport</keyword>
<name>RSXE_ECO45</name>
<dbReference type="EC" id="7.-.-.-" evidence="1"/>
<dbReference type="EMBL" id="CU928161">
    <property type="protein sequence ID" value="CAR02993.1"/>
    <property type="molecule type" value="Genomic_DNA"/>
</dbReference>
<dbReference type="RefSeq" id="WP_001289658.1">
    <property type="nucleotide sequence ID" value="NC_011742.1"/>
</dbReference>
<dbReference type="SMR" id="B7M9Y6"/>
<dbReference type="KEGG" id="ecz:ECS88_1680"/>
<dbReference type="HOGENOM" id="CLU_046659_1_0_6"/>
<dbReference type="Proteomes" id="UP000000747">
    <property type="component" value="Chromosome"/>
</dbReference>
<dbReference type="GO" id="GO:0005886">
    <property type="term" value="C:plasma membrane"/>
    <property type="evidence" value="ECO:0007669"/>
    <property type="project" value="UniProtKB-SubCell"/>
</dbReference>
<dbReference type="GO" id="GO:0022900">
    <property type="term" value="P:electron transport chain"/>
    <property type="evidence" value="ECO:0007669"/>
    <property type="project" value="UniProtKB-UniRule"/>
</dbReference>
<dbReference type="HAMAP" id="MF_00478">
    <property type="entry name" value="RsxE_RnfE"/>
    <property type="match status" value="1"/>
</dbReference>
<dbReference type="InterPro" id="IPR003667">
    <property type="entry name" value="NqrDE/RnfAE"/>
</dbReference>
<dbReference type="InterPro" id="IPR010968">
    <property type="entry name" value="RnfE"/>
</dbReference>
<dbReference type="NCBIfam" id="NF009070">
    <property type="entry name" value="PRK12405.1"/>
    <property type="match status" value="1"/>
</dbReference>
<dbReference type="NCBIfam" id="TIGR01948">
    <property type="entry name" value="rnfE"/>
    <property type="match status" value="1"/>
</dbReference>
<dbReference type="PANTHER" id="PTHR30586">
    <property type="entry name" value="ELECTRON TRANSPORT COMPLEX PROTEIN RNFE"/>
    <property type="match status" value="1"/>
</dbReference>
<dbReference type="PANTHER" id="PTHR30586:SF0">
    <property type="entry name" value="ION-TRANSLOCATING OXIDOREDUCTASE COMPLEX SUBUNIT E"/>
    <property type="match status" value="1"/>
</dbReference>
<dbReference type="Pfam" id="PF02508">
    <property type="entry name" value="Rnf-Nqr"/>
    <property type="match status" value="1"/>
</dbReference>
<dbReference type="PIRSF" id="PIRSF006102">
    <property type="entry name" value="NQR_DE"/>
    <property type="match status" value="1"/>
</dbReference>
<organism>
    <name type="scientific">Escherichia coli O45:K1 (strain S88 / ExPEC)</name>
    <dbReference type="NCBI Taxonomy" id="585035"/>
    <lineage>
        <taxon>Bacteria</taxon>
        <taxon>Pseudomonadati</taxon>
        <taxon>Pseudomonadota</taxon>
        <taxon>Gammaproteobacteria</taxon>
        <taxon>Enterobacterales</taxon>
        <taxon>Enterobacteriaceae</taxon>
        <taxon>Escherichia</taxon>
    </lineage>
</organism>
<reference key="1">
    <citation type="journal article" date="2009" name="PLoS Genet.">
        <title>Organised genome dynamics in the Escherichia coli species results in highly diverse adaptive paths.</title>
        <authorList>
            <person name="Touchon M."/>
            <person name="Hoede C."/>
            <person name="Tenaillon O."/>
            <person name="Barbe V."/>
            <person name="Baeriswyl S."/>
            <person name="Bidet P."/>
            <person name="Bingen E."/>
            <person name="Bonacorsi S."/>
            <person name="Bouchier C."/>
            <person name="Bouvet O."/>
            <person name="Calteau A."/>
            <person name="Chiapello H."/>
            <person name="Clermont O."/>
            <person name="Cruveiller S."/>
            <person name="Danchin A."/>
            <person name="Diard M."/>
            <person name="Dossat C."/>
            <person name="Karoui M.E."/>
            <person name="Frapy E."/>
            <person name="Garry L."/>
            <person name="Ghigo J.M."/>
            <person name="Gilles A.M."/>
            <person name="Johnson J."/>
            <person name="Le Bouguenec C."/>
            <person name="Lescat M."/>
            <person name="Mangenot S."/>
            <person name="Martinez-Jehanne V."/>
            <person name="Matic I."/>
            <person name="Nassif X."/>
            <person name="Oztas S."/>
            <person name="Petit M.A."/>
            <person name="Pichon C."/>
            <person name="Rouy Z."/>
            <person name="Ruf C.S."/>
            <person name="Schneider D."/>
            <person name="Tourret J."/>
            <person name="Vacherie B."/>
            <person name="Vallenet D."/>
            <person name="Medigue C."/>
            <person name="Rocha E.P.C."/>
            <person name="Denamur E."/>
        </authorList>
    </citation>
    <scope>NUCLEOTIDE SEQUENCE [LARGE SCALE GENOMIC DNA]</scope>
    <source>
        <strain>S88 / ExPEC</strain>
    </source>
</reference>
<gene>
    <name evidence="1" type="primary">rsxE</name>
    <name type="ordered locus">ECS88_1680</name>
</gene>
<sequence length="231" mass="24508">MSEIKDVIVQGLWKNNSALVQLLGLCPLLAVTSTATNALGLGLATTLVLTLTNLTISTLRHWTPAEIRIPIYVMIIASVVSAVQMLINAYAFGLYQSLGIFIPLIVTNCIVVGRAEAFAAKKGPALSALDGFSIGMGATCAMFVLGSLREIIGNGTLFDGADALLGSWAKVLRVEIFRTDSPFLLAMLPPGAFIGLGLMLAGKYLIDEKMKKRRTEAVAERALPNGETGNV</sequence>
<feature type="chain" id="PRO_1000125846" description="Ion-translocating oxidoreductase complex subunit E">
    <location>
        <begin position="1"/>
        <end position="231"/>
    </location>
</feature>
<feature type="transmembrane region" description="Helical" evidence="1">
    <location>
        <begin position="18"/>
        <end position="38"/>
    </location>
</feature>
<feature type="transmembrane region" description="Helical" evidence="1">
    <location>
        <begin position="39"/>
        <end position="59"/>
    </location>
</feature>
<feature type="transmembrane region" description="Helical" evidence="1">
    <location>
        <begin position="63"/>
        <end position="83"/>
    </location>
</feature>
<feature type="transmembrane region" description="Helical" evidence="1">
    <location>
        <begin position="86"/>
        <end position="106"/>
    </location>
</feature>
<feature type="transmembrane region" description="Helical" evidence="1">
    <location>
        <begin position="125"/>
        <end position="145"/>
    </location>
</feature>
<feature type="transmembrane region" description="Helical" evidence="1">
    <location>
        <begin position="182"/>
        <end position="202"/>
    </location>
</feature>
<accession>B7M9Y6</accession>